<name>ENDA_THEVO</name>
<protein>
    <recommendedName>
        <fullName evidence="2">tRNA-splicing endonuclease</fullName>
        <ecNumber evidence="2">4.6.1.16</ecNumber>
    </recommendedName>
    <alternativeName>
        <fullName evidence="2">tRNA-intron endonuclease</fullName>
    </alternativeName>
</protein>
<sequence>MSDGLCNGISFNVSEGHGPNYIVGRYKLGFVQQGILFLDPYECLYLYFKGRITFEDSEESALKKLFSITSVERYTAYTLLKNKGYRVHEDNGTIFFRKSTEIPRSVVVVREYDEIDVGKFFTERPDFYFTVDEEGDATIYRIDEIDIKGTENNKIGKCSVTDFGDRHFTKDDLPHWMGTKFHEYRMLTDFEANLIEGKEPKGMAEEVYRDLLSRGCIVKTGFKYGTNFRVYEGEKSEHAEYLVSVVENKLIWYYISRAVRVASSVRKKMIFTTIIDGKIKYIMISRSKDIVI</sequence>
<comment type="function">
    <text evidence="1">Endonuclease that removes tRNA introns. Cleaves pre-tRNA at the 5'- and 3'-splice sites to release the intron. The products are an intron and two tRNA half-molecules bearing 2',3' cyclic phosphate and 5'-OH termini. Recognizes a pseudosymmetric substrate in which 2 bulged loops of 3 bases are separated by a stem of 4 bp (By similarity).</text>
</comment>
<comment type="catalytic activity">
    <reaction evidence="2">
        <text>pretRNA = a 3'-half-tRNA molecule with a 5'-OH end + a 5'-half-tRNA molecule with a 2',3'-cyclic phosphate end + an intron with a 2',3'-cyclic phosphate and a 5'-hydroxyl terminus.</text>
        <dbReference type="EC" id="4.6.1.16"/>
    </reaction>
</comment>
<comment type="subunit">
    <text evidence="2">Homodimer.</text>
</comment>
<comment type="similarity">
    <text evidence="2">Belongs to the tRNA-intron endonuclease family. Archaeal long subfamily.</text>
</comment>
<organism>
    <name type="scientific">Thermoplasma volcanium (strain ATCC 51530 / DSM 4299 / JCM 9571 / NBRC 15438 / GSS1)</name>
    <dbReference type="NCBI Taxonomy" id="273116"/>
    <lineage>
        <taxon>Archaea</taxon>
        <taxon>Methanobacteriati</taxon>
        <taxon>Thermoplasmatota</taxon>
        <taxon>Thermoplasmata</taxon>
        <taxon>Thermoplasmatales</taxon>
        <taxon>Thermoplasmataceae</taxon>
        <taxon>Thermoplasma</taxon>
    </lineage>
</organism>
<proteinExistence type="inferred from homology"/>
<gene>
    <name evidence="2" type="primary">endA</name>
    <name type="ordered locus">TV0402</name>
    <name type="ORF">TVG0390826</name>
</gene>
<keyword id="KW-0456">Lyase</keyword>
<keyword id="KW-0819">tRNA processing</keyword>
<reference key="1">
    <citation type="journal article" date="2000" name="Proc. Natl. Acad. Sci. U.S.A.">
        <title>Archaeal adaptation to higher temperatures revealed by genomic sequence of Thermoplasma volcanium.</title>
        <authorList>
            <person name="Kawashima T."/>
            <person name="Amano N."/>
            <person name="Koike H."/>
            <person name="Makino S."/>
            <person name="Higuchi S."/>
            <person name="Kawashima-Ohya Y."/>
            <person name="Watanabe K."/>
            <person name="Yamazaki M."/>
            <person name="Kanehori K."/>
            <person name="Kawamoto T."/>
            <person name="Nunoshiba T."/>
            <person name="Yamamoto Y."/>
            <person name="Aramaki H."/>
            <person name="Makino K."/>
            <person name="Suzuki M."/>
        </authorList>
    </citation>
    <scope>NUCLEOTIDE SEQUENCE [LARGE SCALE GENOMIC DNA]</scope>
    <source>
        <strain>ATCC 51530 / DSM 4299 / JCM 9571 / NBRC 15438 / GSS1</strain>
    </source>
</reference>
<dbReference type="EC" id="4.6.1.16" evidence="2"/>
<dbReference type="EMBL" id="BA000011">
    <property type="protein sequence ID" value="BAB59544.1"/>
    <property type="molecule type" value="Genomic_DNA"/>
</dbReference>
<dbReference type="RefSeq" id="WP_010916658.1">
    <property type="nucleotide sequence ID" value="NC_002689.2"/>
</dbReference>
<dbReference type="SMR" id="Q97BQ3"/>
<dbReference type="STRING" id="273116.gene:9381180"/>
<dbReference type="PaxDb" id="273116-14324617"/>
<dbReference type="GeneID" id="1440916"/>
<dbReference type="KEGG" id="tvo:TVG0390826"/>
<dbReference type="eggNOG" id="arCOG01701">
    <property type="taxonomic scope" value="Archaea"/>
</dbReference>
<dbReference type="HOGENOM" id="CLU_965070_0_0_2"/>
<dbReference type="OrthoDB" id="46045at2157"/>
<dbReference type="PhylomeDB" id="Q97BQ3"/>
<dbReference type="Proteomes" id="UP000001017">
    <property type="component" value="Chromosome"/>
</dbReference>
<dbReference type="GO" id="GO:0005737">
    <property type="term" value="C:cytoplasm"/>
    <property type="evidence" value="ECO:0007669"/>
    <property type="project" value="TreeGrafter"/>
</dbReference>
<dbReference type="GO" id="GO:0016829">
    <property type="term" value="F:lyase activity"/>
    <property type="evidence" value="ECO:0007669"/>
    <property type="project" value="UniProtKB-KW"/>
</dbReference>
<dbReference type="GO" id="GO:0003676">
    <property type="term" value="F:nucleic acid binding"/>
    <property type="evidence" value="ECO:0007669"/>
    <property type="project" value="InterPro"/>
</dbReference>
<dbReference type="GO" id="GO:0000213">
    <property type="term" value="F:tRNA-intron endonuclease activity"/>
    <property type="evidence" value="ECO:0007669"/>
    <property type="project" value="UniProtKB-UniRule"/>
</dbReference>
<dbReference type="GO" id="GO:0006388">
    <property type="term" value="P:tRNA splicing, via endonucleolytic cleavage and ligation"/>
    <property type="evidence" value="ECO:0007669"/>
    <property type="project" value="UniProtKB-UniRule"/>
</dbReference>
<dbReference type="CDD" id="cd22363">
    <property type="entry name" value="tRNA-intron_lyase_C"/>
    <property type="match status" value="1"/>
</dbReference>
<dbReference type="Gene3D" id="3.40.1350.10">
    <property type="match status" value="1"/>
</dbReference>
<dbReference type="Gene3D" id="3.40.1350.150">
    <property type="match status" value="1"/>
</dbReference>
<dbReference type="HAMAP" id="MF_01834">
    <property type="entry name" value="EndA_long"/>
    <property type="match status" value="1"/>
</dbReference>
<dbReference type="InterPro" id="IPR011856">
    <property type="entry name" value="tRNA_endonuc-like_dom_sf"/>
</dbReference>
<dbReference type="InterPro" id="IPR036167">
    <property type="entry name" value="tRNA_intron_Endo_cat-like_sf"/>
</dbReference>
<dbReference type="InterPro" id="IPR006677">
    <property type="entry name" value="tRNA_intron_Endonuc_cat-like"/>
</dbReference>
<dbReference type="InterPro" id="IPR006676">
    <property type="entry name" value="tRNA_splic"/>
</dbReference>
<dbReference type="InterPro" id="IPR023516">
    <property type="entry name" value="tRNA_splic_arch_long"/>
</dbReference>
<dbReference type="NCBIfam" id="TIGR00324">
    <property type="entry name" value="endA"/>
    <property type="match status" value="1"/>
</dbReference>
<dbReference type="NCBIfam" id="NF006797">
    <property type="entry name" value="PRK09300.1-5"/>
    <property type="match status" value="1"/>
</dbReference>
<dbReference type="PANTHER" id="PTHR21227">
    <property type="entry name" value="TRNA-SPLICING ENDONUCLEASE SUBUNIT SEN2"/>
    <property type="match status" value="1"/>
</dbReference>
<dbReference type="PANTHER" id="PTHR21227:SF0">
    <property type="entry name" value="TRNA-SPLICING ENDONUCLEASE SUBUNIT SEN2"/>
    <property type="match status" value="1"/>
</dbReference>
<dbReference type="Pfam" id="PF01974">
    <property type="entry name" value="tRNA_int_endo"/>
    <property type="match status" value="1"/>
</dbReference>
<dbReference type="SUPFAM" id="SSF53032">
    <property type="entry name" value="tRNA-intron endonuclease catalytic domain-like"/>
    <property type="match status" value="1"/>
</dbReference>
<evidence type="ECO:0000250" key="1"/>
<evidence type="ECO:0000255" key="2">
    <source>
        <dbReference type="HAMAP-Rule" id="MF_01834"/>
    </source>
</evidence>
<feature type="chain" id="PRO_0000109491" description="tRNA-splicing endonuclease">
    <location>
        <begin position="1"/>
        <end position="292"/>
    </location>
</feature>
<feature type="active site" evidence="2">
    <location>
        <position position="231"/>
    </location>
</feature>
<feature type="active site" evidence="2">
    <location>
        <position position="238"/>
    </location>
</feature>
<feature type="active site" evidence="2">
    <location>
        <position position="267"/>
    </location>
</feature>
<accession>Q97BQ3</accession>